<gene>
    <name evidence="1" type="primary">cgoX</name>
    <name type="synonym">hemY</name>
</gene>
<comment type="function">
    <text evidence="1">Involved in coproporphyrin-dependent heme b biosynthesis. Catalyzes the oxidation of coproporphyrinogen III to coproporphyrin III.</text>
</comment>
<comment type="catalytic activity">
    <reaction evidence="1">
        <text>coproporphyrinogen III + 3 O2 = coproporphyrin III + 3 H2O2</text>
        <dbReference type="Rhea" id="RHEA:43436"/>
        <dbReference type="ChEBI" id="CHEBI:15379"/>
        <dbReference type="ChEBI" id="CHEBI:16240"/>
        <dbReference type="ChEBI" id="CHEBI:57309"/>
        <dbReference type="ChEBI" id="CHEBI:131725"/>
        <dbReference type="EC" id="1.3.3.15"/>
    </reaction>
    <physiologicalReaction direction="left-to-right" evidence="1">
        <dbReference type="Rhea" id="RHEA:43437"/>
    </physiologicalReaction>
</comment>
<comment type="cofactor">
    <cofactor evidence="1">
        <name>FAD</name>
        <dbReference type="ChEBI" id="CHEBI:57692"/>
    </cofactor>
    <text evidence="1">Binds 1 FAD per subunit.</text>
</comment>
<comment type="pathway">
    <text evidence="1">Porphyrin-containing compound metabolism; protoheme biosynthesis.</text>
</comment>
<comment type="subcellular location">
    <subcellularLocation>
        <location evidence="1">Cytoplasm</location>
    </subcellularLocation>
</comment>
<comment type="similarity">
    <text evidence="4">Belongs to the protoporphyrinogen/coproporphyrinogen oxidase family. Coproporphyrinogen III oxidase subfamily.</text>
</comment>
<reference key="1">
    <citation type="journal article" date="1997" name="Appl. Microbiol. Biotechnol.">
        <title>The Propionibacterium freudenreichii hemYHBXRL gene cluster, which encodes enzymes and a regulator involved in the biosynthetic pathway from glutamate to protoheme.</title>
        <authorList>
            <person name="Hashimoto Y."/>
            <person name="Yamashita Y."/>
            <person name="Murooka Y."/>
        </authorList>
    </citation>
    <scope>NUCLEOTIDE SEQUENCE [GENOMIC DNA]</scope>
    <source>
        <strain>ATCC 6207 / DSM 20271 / LMG 16412 / NBRC 12424 / NCIMB 5959 / NCTC 10470 / NRRL B-3523</strain>
    </source>
</reference>
<sequence>MSTTDRVTTPTPTVSGTDAPGPDASHCHLVVVGGGITGLAAAWQGMARGARVSVVESDDHFGGKVVTDRRDGFLVEQGPDSFVAYRPAALKLIEELGLSDQVIAPGGGRRVSLLSRGKLRPMPAGMGMVLPTRMWPFVTTTVLSWPDKIRAGLDLVIPRRLPDHDVAIGAFLRQRLGDGIVRRFADPMVGGIYGAGIDELSLDAVLPSLRDNERDHRSLMVASLAGGRASRRAARQRAAQNNAQQNSSHQNSTGQNNSAGTRGPAASPFRTLRGGLGQLIDALVDQLRAGGVELLVNTSVDLLGRDGVHLSDGRVLPADAVVLAGGVASSARLLRPQLPAAARALAQIPLASTTIVSLAWPVSAFDVAPDSQGWLEADAGPVSGLTASSIKFAGRAPDGSVLMRVFVPDKRGPLTDAPDDELLSAVIDHVRPLLGVHGEPGLTQITRWHKVMPKYTVGHLERAAVVDSTLAEQRPTWAVAGSALHGVGLPDCISDARHSADEVIDAALAATPSAPNRNAATDRTETR</sequence>
<proteinExistence type="inferred from homology"/>
<protein>
    <recommendedName>
        <fullName evidence="1">Coproporphyrinogen III oxidase</fullName>
        <ecNumber evidence="1">1.3.3.15</ecNumber>
    </recommendedName>
</protein>
<dbReference type="EC" id="1.3.3.15" evidence="1"/>
<dbReference type="EMBL" id="D85417">
    <property type="protein sequence ID" value="BAA21909.1"/>
    <property type="molecule type" value="Genomic_DNA"/>
</dbReference>
<dbReference type="SMR" id="O32434"/>
<dbReference type="UniPathway" id="UPA00252"/>
<dbReference type="GO" id="GO:0005737">
    <property type="term" value="C:cytoplasm"/>
    <property type="evidence" value="ECO:0007669"/>
    <property type="project" value="UniProtKB-SubCell"/>
</dbReference>
<dbReference type="GO" id="GO:0004729">
    <property type="term" value="F:oxygen-dependent protoporphyrinogen oxidase activity"/>
    <property type="evidence" value="ECO:0007669"/>
    <property type="project" value="InterPro"/>
</dbReference>
<dbReference type="GO" id="GO:0006783">
    <property type="term" value="P:heme biosynthetic process"/>
    <property type="evidence" value="ECO:0007669"/>
    <property type="project" value="UniProtKB-KW"/>
</dbReference>
<dbReference type="Gene3D" id="3.50.50.60">
    <property type="entry name" value="FAD/NAD(P)-binding domain"/>
    <property type="match status" value="1"/>
</dbReference>
<dbReference type="Gene3D" id="1.10.3110.10">
    <property type="entry name" value="protoporphyrinogen ix oxidase, domain 3"/>
    <property type="match status" value="1"/>
</dbReference>
<dbReference type="Gene3D" id="3.90.660.20">
    <property type="entry name" value="Protoporphyrinogen oxidase, mitochondrial, domain 2"/>
    <property type="match status" value="1"/>
</dbReference>
<dbReference type="InterPro" id="IPR002937">
    <property type="entry name" value="Amino_oxidase"/>
</dbReference>
<dbReference type="InterPro" id="IPR036188">
    <property type="entry name" value="FAD/NAD-bd_sf"/>
</dbReference>
<dbReference type="InterPro" id="IPR004572">
    <property type="entry name" value="Protoporphyrinogen_oxidase"/>
</dbReference>
<dbReference type="InterPro" id="IPR050464">
    <property type="entry name" value="Zeta_carotene_desat/Oxidored"/>
</dbReference>
<dbReference type="NCBIfam" id="TIGR00562">
    <property type="entry name" value="proto_IX_ox"/>
    <property type="match status" value="1"/>
</dbReference>
<dbReference type="PANTHER" id="PTHR42923">
    <property type="entry name" value="PROTOPORPHYRINOGEN OXIDASE"/>
    <property type="match status" value="1"/>
</dbReference>
<dbReference type="PANTHER" id="PTHR42923:SF3">
    <property type="entry name" value="PROTOPORPHYRINOGEN OXIDASE"/>
    <property type="match status" value="1"/>
</dbReference>
<dbReference type="Pfam" id="PF01593">
    <property type="entry name" value="Amino_oxidase"/>
    <property type="match status" value="1"/>
</dbReference>
<dbReference type="SUPFAM" id="SSF54373">
    <property type="entry name" value="FAD-linked reductases, C-terminal domain"/>
    <property type="match status" value="1"/>
</dbReference>
<dbReference type="SUPFAM" id="SSF51905">
    <property type="entry name" value="FAD/NAD(P)-binding domain"/>
    <property type="match status" value="1"/>
</dbReference>
<organism>
    <name type="scientific">Propionibacterium freudenreichii subsp. freudenreichii</name>
    <dbReference type="NCBI Taxonomy" id="66712"/>
    <lineage>
        <taxon>Bacteria</taxon>
        <taxon>Bacillati</taxon>
        <taxon>Actinomycetota</taxon>
        <taxon>Actinomycetes</taxon>
        <taxon>Propionibacteriales</taxon>
        <taxon>Propionibacteriaceae</taxon>
        <taxon>Propionibacterium</taxon>
    </lineage>
</organism>
<evidence type="ECO:0000250" key="1">
    <source>
        <dbReference type="UniProtKB" id="P32397"/>
    </source>
</evidence>
<evidence type="ECO:0000250" key="2">
    <source>
        <dbReference type="UniProtKB" id="P56601"/>
    </source>
</evidence>
<evidence type="ECO:0000256" key="3">
    <source>
        <dbReference type="SAM" id="MobiDB-lite"/>
    </source>
</evidence>
<evidence type="ECO:0000305" key="4"/>
<feature type="chain" id="PRO_0000135268" description="Coproporphyrinogen III oxidase">
    <location>
        <begin position="1"/>
        <end position="527"/>
    </location>
</feature>
<feature type="region of interest" description="Disordered" evidence="3">
    <location>
        <begin position="1"/>
        <end position="23"/>
    </location>
</feature>
<feature type="region of interest" description="Disordered" evidence="3">
    <location>
        <begin position="231"/>
        <end position="267"/>
    </location>
</feature>
<feature type="compositionally biased region" description="Low complexity" evidence="3">
    <location>
        <begin position="1"/>
        <end position="14"/>
    </location>
</feature>
<feature type="compositionally biased region" description="Low complexity" evidence="3">
    <location>
        <begin position="236"/>
        <end position="252"/>
    </location>
</feature>
<feature type="binding site" evidence="1">
    <location>
        <begin position="33"/>
        <end position="38"/>
    </location>
    <ligand>
        <name>FAD</name>
        <dbReference type="ChEBI" id="CHEBI:57692"/>
    </ligand>
</feature>
<feature type="binding site" evidence="1">
    <location>
        <begin position="56"/>
        <end position="57"/>
    </location>
    <ligand>
        <name>FAD</name>
        <dbReference type="ChEBI" id="CHEBI:57692"/>
    </ligand>
</feature>
<feature type="binding site" evidence="1">
    <location>
        <position position="64"/>
    </location>
    <ligand>
        <name>FAD</name>
        <dbReference type="ChEBI" id="CHEBI:57692"/>
    </ligand>
</feature>
<feature type="binding site" evidence="1">
    <location>
        <begin position="78"/>
        <end position="81"/>
    </location>
    <ligand>
        <name>FAD</name>
        <dbReference type="ChEBI" id="CHEBI:57692"/>
    </ligand>
</feature>
<feature type="binding site" evidence="2">
    <location>
        <position position="300"/>
    </location>
    <ligand>
        <name>FAD</name>
        <dbReference type="ChEBI" id="CHEBI:57692"/>
    </ligand>
</feature>
<feature type="binding site" evidence="1">
    <location>
        <position position="448"/>
    </location>
    <ligand>
        <name>FAD</name>
        <dbReference type="ChEBI" id="CHEBI:57692"/>
    </ligand>
</feature>
<feature type="binding site" evidence="1">
    <location>
        <begin position="487"/>
        <end position="489"/>
    </location>
    <ligand>
        <name>FAD</name>
        <dbReference type="ChEBI" id="CHEBI:57692"/>
    </ligand>
</feature>
<accession>O32434</accession>
<keyword id="KW-0963">Cytoplasm</keyword>
<keyword id="KW-0274">FAD</keyword>
<keyword id="KW-0285">Flavoprotein</keyword>
<keyword id="KW-0350">Heme biosynthesis</keyword>
<keyword id="KW-0560">Oxidoreductase</keyword>
<name>CGOX_PROFF</name>